<comment type="subcellular location">
    <subcellularLocation>
        <location evidence="1">Secreted</location>
    </subcellularLocation>
</comment>
<comment type="tissue specificity">
    <text evidence="1">Expressed by the skin glands.</text>
</comment>
<comment type="mass spectrometry" mass="657.39" error="0.01" method="MALDI" evidence="1"/>
<comment type="similarity">
    <text evidence="2">Belongs to the frog skin active peptide (FSAP) family. Tryptophillin subfamily.</text>
</comment>
<protein>
    <recommendedName>
        <fullName>Tryptophyllin-5.1</fullName>
    </recommendedName>
</protein>
<feature type="peptide" id="PRO_0000250601" description="Tryptophyllin-5.1" evidence="1">
    <location>
        <begin position="1"/>
        <end position="5"/>
    </location>
</feature>
<feature type="modified residue" description="Leucine amide" evidence="1">
    <location>
        <position position="5"/>
    </location>
</feature>
<proteinExistence type="evidence at protein level"/>
<dbReference type="GO" id="GO:0005576">
    <property type="term" value="C:extracellular region"/>
    <property type="evidence" value="ECO:0007669"/>
    <property type="project" value="UniProtKB-SubCell"/>
</dbReference>
<dbReference type="GO" id="GO:0006952">
    <property type="term" value="P:defense response"/>
    <property type="evidence" value="ECO:0007669"/>
    <property type="project" value="UniProtKB-KW"/>
</dbReference>
<name>TY51_PITHY</name>
<keyword id="KW-0027">Amidation</keyword>
<keyword id="KW-0878">Amphibian defense peptide</keyword>
<keyword id="KW-0903">Direct protein sequencing</keyword>
<keyword id="KW-0964">Secreted</keyword>
<reference evidence="2" key="1">
    <citation type="journal article" date="2007" name="Nat. Chem. Biol.">
        <title>High-throughput imaging co-localization of peptides and proteins.</title>
        <authorList>
            <person name="Silva L.P."/>
            <person name="Brand G.D."/>
            <person name="Bloch C. Jr."/>
        </authorList>
    </citation>
    <scope>PROTEIN SEQUENCE</scope>
    <scope>SUBCELLULAR LOCATION</scope>
    <scope>TISSUE SPECIFICITY</scope>
    <scope>MASS SPECTROMETRY</scope>
    <scope>AMIDATION AT LEU-5</scope>
    <source>
        <tissue evidence="1">Skin secretion</tissue>
    </source>
</reference>
<organism>
    <name type="scientific">Pithecopus hypochondrialis</name>
    <name type="common">Orange-legged leaf frog</name>
    <name type="synonym">Phyllomedusa hypochondrialis</name>
    <dbReference type="NCBI Taxonomy" id="317381"/>
    <lineage>
        <taxon>Eukaryota</taxon>
        <taxon>Metazoa</taxon>
        <taxon>Chordata</taxon>
        <taxon>Craniata</taxon>
        <taxon>Vertebrata</taxon>
        <taxon>Euteleostomi</taxon>
        <taxon>Amphibia</taxon>
        <taxon>Batrachia</taxon>
        <taxon>Anura</taxon>
        <taxon>Neobatrachia</taxon>
        <taxon>Hyloidea</taxon>
        <taxon>Hylidae</taxon>
        <taxon>Phyllomedusinae</taxon>
        <taxon>Pithecopus</taxon>
    </lineage>
</organism>
<accession>P84573</accession>
<evidence type="ECO:0000269" key="1">
    <source ref="1"/>
</evidence>
<evidence type="ECO:0000305" key="2"/>
<sequence length="5" mass="659">FPPWL</sequence>